<accession>B2US28</accession>
<feature type="chain" id="PRO_1000192262" description="Nucleoside diphosphate kinase">
    <location>
        <begin position="1"/>
        <end position="137"/>
    </location>
</feature>
<feature type="active site" description="Pros-phosphohistidine intermediate" evidence="1">
    <location>
        <position position="116"/>
    </location>
</feature>
<feature type="binding site" evidence="1">
    <location>
        <position position="10"/>
    </location>
    <ligand>
        <name>ATP</name>
        <dbReference type="ChEBI" id="CHEBI:30616"/>
    </ligand>
</feature>
<feature type="binding site" evidence="1">
    <location>
        <position position="58"/>
    </location>
    <ligand>
        <name>ATP</name>
        <dbReference type="ChEBI" id="CHEBI:30616"/>
    </ligand>
</feature>
<feature type="binding site" evidence="1">
    <location>
        <position position="86"/>
    </location>
    <ligand>
        <name>ATP</name>
        <dbReference type="ChEBI" id="CHEBI:30616"/>
    </ligand>
</feature>
<feature type="binding site" evidence="1">
    <location>
        <position position="92"/>
    </location>
    <ligand>
        <name>ATP</name>
        <dbReference type="ChEBI" id="CHEBI:30616"/>
    </ligand>
</feature>
<feature type="binding site" evidence="1">
    <location>
        <position position="103"/>
    </location>
    <ligand>
        <name>ATP</name>
        <dbReference type="ChEBI" id="CHEBI:30616"/>
    </ligand>
</feature>
<feature type="binding site" evidence="1">
    <location>
        <position position="113"/>
    </location>
    <ligand>
        <name>ATP</name>
        <dbReference type="ChEBI" id="CHEBI:30616"/>
    </ligand>
</feature>
<sequence length="137" mass="15319">MKQRTLSIIKPDALKKKVVGKIIDRFESNGLEVIAMKRLHLSVKDAENFYAIHRERPFFKDLIEFMVSGPVVVMVLEGKDAVAKNRDLMGATDPKLAQKGTIRADFAESIDANAVHGSDSLENARNEIAFFFAARDL</sequence>
<dbReference type="EC" id="2.7.4.6" evidence="1"/>
<dbReference type="EMBL" id="CP001072">
    <property type="protein sequence ID" value="ACD47660.1"/>
    <property type="molecule type" value="Genomic_DNA"/>
</dbReference>
<dbReference type="RefSeq" id="WP_000813734.1">
    <property type="nucleotide sequence ID" value="NC_010698.2"/>
</dbReference>
<dbReference type="SMR" id="B2US28"/>
<dbReference type="KEGG" id="hps:HPSH_01015"/>
<dbReference type="HOGENOM" id="CLU_060216_8_1_7"/>
<dbReference type="GO" id="GO:0005737">
    <property type="term" value="C:cytoplasm"/>
    <property type="evidence" value="ECO:0007669"/>
    <property type="project" value="UniProtKB-SubCell"/>
</dbReference>
<dbReference type="GO" id="GO:0005524">
    <property type="term" value="F:ATP binding"/>
    <property type="evidence" value="ECO:0007669"/>
    <property type="project" value="UniProtKB-UniRule"/>
</dbReference>
<dbReference type="GO" id="GO:0046872">
    <property type="term" value="F:metal ion binding"/>
    <property type="evidence" value="ECO:0007669"/>
    <property type="project" value="UniProtKB-KW"/>
</dbReference>
<dbReference type="GO" id="GO:0004550">
    <property type="term" value="F:nucleoside diphosphate kinase activity"/>
    <property type="evidence" value="ECO:0007669"/>
    <property type="project" value="UniProtKB-UniRule"/>
</dbReference>
<dbReference type="GO" id="GO:0006241">
    <property type="term" value="P:CTP biosynthetic process"/>
    <property type="evidence" value="ECO:0007669"/>
    <property type="project" value="UniProtKB-UniRule"/>
</dbReference>
<dbReference type="GO" id="GO:0006183">
    <property type="term" value="P:GTP biosynthetic process"/>
    <property type="evidence" value="ECO:0007669"/>
    <property type="project" value="UniProtKB-UniRule"/>
</dbReference>
<dbReference type="GO" id="GO:0006228">
    <property type="term" value="P:UTP biosynthetic process"/>
    <property type="evidence" value="ECO:0007669"/>
    <property type="project" value="UniProtKB-UniRule"/>
</dbReference>
<dbReference type="CDD" id="cd04413">
    <property type="entry name" value="NDPk_I"/>
    <property type="match status" value="1"/>
</dbReference>
<dbReference type="FunFam" id="3.30.70.141:FF:000001">
    <property type="entry name" value="Nucleoside diphosphate kinase"/>
    <property type="match status" value="1"/>
</dbReference>
<dbReference type="Gene3D" id="3.30.70.141">
    <property type="entry name" value="Nucleoside diphosphate kinase-like domain"/>
    <property type="match status" value="1"/>
</dbReference>
<dbReference type="HAMAP" id="MF_00451">
    <property type="entry name" value="NDP_kinase"/>
    <property type="match status" value="1"/>
</dbReference>
<dbReference type="InterPro" id="IPR034907">
    <property type="entry name" value="NDK-like_dom"/>
</dbReference>
<dbReference type="InterPro" id="IPR036850">
    <property type="entry name" value="NDK-like_dom_sf"/>
</dbReference>
<dbReference type="InterPro" id="IPR001564">
    <property type="entry name" value="Nucleoside_diP_kinase"/>
</dbReference>
<dbReference type="InterPro" id="IPR023005">
    <property type="entry name" value="Nucleoside_diP_kinase_AS"/>
</dbReference>
<dbReference type="NCBIfam" id="NF001908">
    <property type="entry name" value="PRK00668.1"/>
    <property type="match status" value="1"/>
</dbReference>
<dbReference type="PANTHER" id="PTHR46161">
    <property type="entry name" value="NUCLEOSIDE DIPHOSPHATE KINASE"/>
    <property type="match status" value="1"/>
</dbReference>
<dbReference type="PANTHER" id="PTHR46161:SF3">
    <property type="entry name" value="NUCLEOSIDE DIPHOSPHATE KINASE DDB_G0292928-RELATED"/>
    <property type="match status" value="1"/>
</dbReference>
<dbReference type="Pfam" id="PF00334">
    <property type="entry name" value="NDK"/>
    <property type="match status" value="1"/>
</dbReference>
<dbReference type="PRINTS" id="PR01243">
    <property type="entry name" value="NUCDPKINASE"/>
</dbReference>
<dbReference type="SMART" id="SM00562">
    <property type="entry name" value="NDK"/>
    <property type="match status" value="1"/>
</dbReference>
<dbReference type="SUPFAM" id="SSF54919">
    <property type="entry name" value="Nucleoside diphosphate kinase, NDK"/>
    <property type="match status" value="1"/>
</dbReference>
<dbReference type="PROSITE" id="PS00469">
    <property type="entry name" value="NDPK"/>
    <property type="match status" value="1"/>
</dbReference>
<dbReference type="PROSITE" id="PS51374">
    <property type="entry name" value="NDPK_LIKE"/>
    <property type="match status" value="1"/>
</dbReference>
<evidence type="ECO:0000255" key="1">
    <source>
        <dbReference type="HAMAP-Rule" id="MF_00451"/>
    </source>
</evidence>
<keyword id="KW-0067">ATP-binding</keyword>
<keyword id="KW-0963">Cytoplasm</keyword>
<keyword id="KW-0418">Kinase</keyword>
<keyword id="KW-0460">Magnesium</keyword>
<keyword id="KW-0479">Metal-binding</keyword>
<keyword id="KW-0546">Nucleotide metabolism</keyword>
<keyword id="KW-0547">Nucleotide-binding</keyword>
<keyword id="KW-0597">Phosphoprotein</keyword>
<keyword id="KW-0808">Transferase</keyword>
<comment type="function">
    <text evidence="1">Major role in the synthesis of nucleoside triphosphates other than ATP. The ATP gamma phosphate is transferred to the NDP beta phosphate via a ping-pong mechanism, using a phosphorylated active-site intermediate.</text>
</comment>
<comment type="catalytic activity">
    <reaction evidence="1">
        <text>a 2'-deoxyribonucleoside 5'-diphosphate + ATP = a 2'-deoxyribonucleoside 5'-triphosphate + ADP</text>
        <dbReference type="Rhea" id="RHEA:44640"/>
        <dbReference type="ChEBI" id="CHEBI:30616"/>
        <dbReference type="ChEBI" id="CHEBI:61560"/>
        <dbReference type="ChEBI" id="CHEBI:73316"/>
        <dbReference type="ChEBI" id="CHEBI:456216"/>
        <dbReference type="EC" id="2.7.4.6"/>
    </reaction>
</comment>
<comment type="catalytic activity">
    <reaction evidence="1">
        <text>a ribonucleoside 5'-diphosphate + ATP = a ribonucleoside 5'-triphosphate + ADP</text>
        <dbReference type="Rhea" id="RHEA:18113"/>
        <dbReference type="ChEBI" id="CHEBI:30616"/>
        <dbReference type="ChEBI" id="CHEBI:57930"/>
        <dbReference type="ChEBI" id="CHEBI:61557"/>
        <dbReference type="ChEBI" id="CHEBI:456216"/>
        <dbReference type="EC" id="2.7.4.6"/>
    </reaction>
</comment>
<comment type="cofactor">
    <cofactor evidence="1">
        <name>Mg(2+)</name>
        <dbReference type="ChEBI" id="CHEBI:18420"/>
    </cofactor>
</comment>
<comment type="subunit">
    <text evidence="1">Homotetramer.</text>
</comment>
<comment type="subcellular location">
    <subcellularLocation>
        <location evidence="1">Cytoplasm</location>
    </subcellularLocation>
</comment>
<comment type="similarity">
    <text evidence="1">Belongs to the NDK family.</text>
</comment>
<organism>
    <name type="scientific">Helicobacter pylori (strain Shi470)</name>
    <dbReference type="NCBI Taxonomy" id="512562"/>
    <lineage>
        <taxon>Bacteria</taxon>
        <taxon>Pseudomonadati</taxon>
        <taxon>Campylobacterota</taxon>
        <taxon>Epsilonproteobacteria</taxon>
        <taxon>Campylobacterales</taxon>
        <taxon>Helicobacteraceae</taxon>
        <taxon>Helicobacter</taxon>
    </lineage>
</organism>
<reference key="1">
    <citation type="submission" date="2008-05" db="EMBL/GenBank/DDBJ databases">
        <title>Genome sequence of Helicobacter pylori from the remote Amazon: traces of Asian ancestry of the first Americans.</title>
        <authorList>
            <person name="Kersulyte D."/>
            <person name="Kalia A."/>
            <person name="Gilman R.H."/>
            <person name="Berg D.E."/>
        </authorList>
    </citation>
    <scope>NUCLEOTIDE SEQUENCE [LARGE SCALE GENOMIC DNA]</scope>
    <source>
        <strain>Shi470</strain>
    </source>
</reference>
<protein>
    <recommendedName>
        <fullName evidence="1">Nucleoside diphosphate kinase</fullName>
        <shortName evidence="1">NDK</shortName>
        <shortName evidence="1">NDP kinase</shortName>
        <ecNumber evidence="1">2.7.4.6</ecNumber>
    </recommendedName>
    <alternativeName>
        <fullName evidence="1">Nucleoside-2-P kinase</fullName>
    </alternativeName>
</protein>
<proteinExistence type="inferred from homology"/>
<gene>
    <name evidence="1" type="primary">ndk</name>
    <name type="ordered locus">HPSH_01015</name>
</gene>
<name>NDK_HELPS</name>